<evidence type="ECO:0000250" key="1"/>
<evidence type="ECO:0000255" key="2">
    <source>
        <dbReference type="PROSITE-ProRule" id="PRU00258"/>
    </source>
</evidence>
<evidence type="ECO:0000255" key="3">
    <source>
        <dbReference type="PROSITE-ProRule" id="PRU01348"/>
    </source>
</evidence>
<evidence type="ECO:0000255" key="4">
    <source>
        <dbReference type="PROSITE-ProRule" id="PRU01363"/>
    </source>
</evidence>
<evidence type="ECO:0000255" key="5">
    <source>
        <dbReference type="PROSITE-ProRule" id="PRU10022"/>
    </source>
</evidence>
<comment type="function">
    <text evidence="1">Probable polyketide synthase.</text>
</comment>
<comment type="cofactor">
    <cofactor evidence="1">
        <name>pantetheine 4'-phosphate</name>
        <dbReference type="ChEBI" id="CHEBI:47942"/>
    </cofactor>
    <text evidence="1">Binds 1 phosphopantetheine covalently.</text>
</comment>
<comment type="domain">
    <text evidence="1">Modular protein that is responsible for the completion of one condensation-processing cycle. The beta-ketoacyl synthase region is responsible for the actual condensation reaction while the acyl/malonyl transferase region is responsible for incorporating carboxylic acids units onto an acyl carrier protein (ACP) domain (By similarity).</text>
</comment>
<comment type="miscellaneous">
    <text>Encoded by one of the numerous copies of polyketide synthase genes in chromosome 2.</text>
</comment>
<accession>B0G103</accession>
<accession>Q86AD4</accession>
<accession>Q86JF0</accession>
<feature type="chain" id="PRO_0000376885" description="Probable polyketide synthase 10">
    <location>
        <begin position="1"/>
        <end position="2485"/>
    </location>
</feature>
<feature type="domain" description="Ketosynthase family 3 (KS3)" evidence="3">
    <location>
        <begin position="8"/>
        <end position="447"/>
    </location>
</feature>
<feature type="domain" description="PKS/mFAS DH" evidence="4">
    <location>
        <begin position="930"/>
        <end position="1220"/>
    </location>
</feature>
<feature type="domain" description="Carrier" evidence="2">
    <location>
        <begin position="2410"/>
        <end position="2485"/>
    </location>
</feature>
<feature type="region of interest" description="Acyl/malonyl transferase">
    <location>
        <begin position="636"/>
        <end position="669"/>
    </location>
</feature>
<feature type="region of interest" description="N-terminal hotdog fold" evidence="4">
    <location>
        <begin position="930"/>
        <end position="1054"/>
    </location>
</feature>
<feature type="region of interest" description="C-terminal hotdog fold" evidence="4">
    <location>
        <begin position="1071"/>
        <end position="1220"/>
    </location>
</feature>
<feature type="active site" description="For beta-ketoacyl synthase activity" evidence="3">
    <location>
        <position position="184"/>
    </location>
</feature>
<feature type="active site" description="For beta-ketoacyl synthase activity" evidence="3">
    <location>
        <position position="325"/>
    </location>
</feature>
<feature type="active site" description="For beta-ketoacyl synthase activity" evidence="3">
    <location>
        <position position="363"/>
    </location>
</feature>
<feature type="active site" description="For acyl/malonyl transferase activity" evidence="5">
    <location>
        <position position="646"/>
    </location>
</feature>
<feature type="active site" description="Proton acceptor; for dehydratase activity" evidence="4">
    <location>
        <position position="964"/>
    </location>
</feature>
<feature type="active site" description="Proton donor; for dehydratase activity" evidence="4">
    <location>
        <position position="1134"/>
    </location>
</feature>
<feature type="modified residue" description="O-(pantetheine 4'-phosphoryl)serine" evidence="2">
    <location>
        <position position="2447"/>
    </location>
</feature>
<name>PKS10_DICDI</name>
<gene>
    <name type="primary">pks10</name>
    <name type="ORF">DDB_G0271662</name>
</gene>
<sequence>MYLEKYQEDDIAIIGVGLRLPGEESGGGVVGELLNDSPQNFWNNLKKGFNGISKTNERWSENYSKLGEISNGYAGVLPLEELKSFDPLFFGISPSEASTIDPQQRLLLKTTWESLEDAGIDHQSIRGSDCSVFIGSSTTEYRESIVNINEQYLNIFGTYAHGIANRISYCFDLRGESVTLDTACASSGTAISMGAQCIKNGKSKLSIVGGVNLIVDTTNIKAFSYLNMLSTSGVCRPFDIGADGLLRGEGVGTIVLKSLKDSIRDGNKIYCIIKGSSYNVDGNGNSDKQNFYAPSSISQSDNIKLAIKSTNGSITCDDIDYFECHGTGTPTGDPIETKGISMAFNRSKQNPLLIGSLKGSSGHSEAASGVIGVIKCCLIFKNKSLVPCVNFSKPNPQIKFEEWNLKVVTEPIPFTSLPSRKLNNKPISIAINNFGVTGANCCIILSEFINNNTNDNLKQINKSFLIPFSANSVKSLENYKLKLNSIINENDYYLNNSAIFNGFVNNQIYNKSKSLSQRSVYVASNLNELVDGKVNFKTSNSKSSNFSILKKKPIVLFVFSGQGSQYNTMFDQLYNDEIIFKESIDRIDNSLFKYYGYSVFEKFKSSNLNSIHEPLIAQAAISMLNISLFELYKHWGIEASFIVGHSLGEISAAHCSGMIDLETLCYIIYHRSIAQIKTHGNGRMLSINQSSDEYISKYSSKYADLEIACYNSQNSIVVAGNEHKLNQLFNELKENNEFATMIASQSSFHTSNQCITKDDIFKLQFTANLPLIPIFSTVTTNLFDNSTLFNSSYIYDNIICPVRFEQTISNFYKHIDDDNDKSDVEVVIIELAPHPTLSYYLKQMKPVIENKDIKVNVYSALHKLKNSTKEFQKVISQLYCDNGININFKCQLENQVNMYDTIFSLPNYQWDDQKYWKVDYTHSRSYINGPPITILGNESYNSPYLSRETYIDIKRNPFKYLNGHQIKMKIYFPGMGYIDNLLKLFKNNHKNIIIDQIEFIAPLILNEGINQCVQTNVNQIEINEYSLNCYYKDIKSNEWVKTCIGNFHISNNLFTQQRNYNINQLINEKCNYSLIERDDLYDMIKIKTGLNYSGDFKGINKCYIGNSCSLSEVSMNLPDNLPDKESFFNCTILDSCTHGFLVLIDYQCQLVFHKVEGLRYYNSNIPTDRNKHKNIYVYSILNQILNDSFHSSVIIMLEDGTVLIEIDNLISKSLTPIQDPLKIEYPMNELFSTHLQPKDSPFPLISMTFKSKFKNINEIKNEFMLNCCKNFISNQFLSNIINRTNIKLNEIKTLTIDQLVKLYCLYNNNERLFRFVFETIKKYDYNSNHSNNENEMVLKDDGIYQVLDTSIKVISKLLFPYENDKEDPITETPTSLFENGLLDKFYGTNNFMTTTIQRNLITDIIINSLKPILNQKLVIRIVELGGGVCSFTVDFLEKLDKLLKENPFHEIEIEFTWSDISSSFIPEAKKKLEPFSNNINIVYRSIDIEKEFKKQGLKHSYFDFIILTNVLHVVKNIGNSLDQLYKILSPNGQILLIEPYVSIVNDSIFGSFSQWWSFEDTEIRKTNCCMEPNSWLQVFKNHNFKNTNSYEEDGSCCYVIHSQKPPLLYGLNELKYTQSPNQIIIYGNENENENENENYTIKFNKSVIKISNIDQFNQSILNSQINNETIIYFTKSINQLDVNNFKFVTFEYIQINKLLLKYKLKSKHVLITLNSRDSNYLSASLVGAKRYFEEYPQLSLKAIDFDLQSLEEIKDIQSLLIELLDENKNTQNDYIIKNCQVYYERVKKEIISKSKFISNSFENNDSLITQLIDSEYKLTSNKPIFKVKEKEEGEEEVEIKVLSTTIGNVNDGDNFGEFSGIITRVCSNSNFKIGEKVYGFGYNTTSSHIVVNGDWIYYKPLNISNNNAASIPYKYLEVLYGLYNIGELDENENILIHLNNNINNNNNNISTLNILKWKGHKGLIYVTVDSNEMEIYVNDNFGGFISGVFILILKCLNSTSRIINFNYLNNNNNDNNDLEFFYKYCRKLNIGYHFIDLKKLIPIRRRGRIIKDLFKEISKAIENNEINLLPIIDYSNLNINHAIQMVKNEKNMVHTIVIENNEDVLENLLKEHSNNSTYSIIKSDYKISENHLGKNLIITGQIGVALEVLKWICKYSKGVENIIILSKSLIKWELKLLIDKTYNSKENNQIKFHFNTIDISNSNELTNTLNQLLKDTNIDNIDSIFHYAFTKVVSEVEDIDLNQLNLSHGAKTMGAINLHNESVNRCWNLKNFINASSTVTLAGSPGQCTYVCANSVLDSLSRYRKSIGLPSICSYYGSIKSGIVLRSESIATSLEKQGYVHVSMNKFLGALDLQIQNPNLSTNLIVSNFNFKLFKNNPQHSIIDKFEHQINENNSKLEISTNNNPSTSTESNKGIDGLLLSKVSELLSINETNFNADITLIDYGADSLITSQLKNFIEKEFSLSVTSQQLQRNSINQLIKFLNKK</sequence>
<keyword id="KW-0596">Phosphopantetheine</keyword>
<keyword id="KW-0597">Phosphoprotein</keyword>
<keyword id="KW-1185">Reference proteome</keyword>
<keyword id="KW-0808">Transferase</keyword>
<proteinExistence type="inferred from homology"/>
<dbReference type="EC" id="2.3.1.-"/>
<dbReference type="EMBL" id="AAFI02000006">
    <property type="protein sequence ID" value="EDR41109.1"/>
    <property type="molecule type" value="Genomic_DNA"/>
</dbReference>
<dbReference type="RefSeq" id="XP_001732967.1">
    <property type="nucleotide sequence ID" value="XM_001732915.1"/>
</dbReference>
<dbReference type="SMR" id="B0G103"/>
<dbReference type="STRING" id="44689.B0G103"/>
<dbReference type="PaxDb" id="44689-DDB0235175"/>
<dbReference type="EnsemblProtists" id="EDR41109">
    <property type="protein sequence ID" value="EDR41109"/>
    <property type="gene ID" value="DDB_G0271662"/>
</dbReference>
<dbReference type="GeneID" id="8618074"/>
<dbReference type="KEGG" id="ddi:DDB_G0271662"/>
<dbReference type="dictyBase" id="DDB_G0271662">
    <property type="gene designation" value="pks10"/>
</dbReference>
<dbReference type="VEuPathDB" id="AmoebaDB:DDB_G0271662"/>
<dbReference type="eggNOG" id="KOG1202">
    <property type="taxonomic scope" value="Eukaryota"/>
</dbReference>
<dbReference type="HOGENOM" id="CLU_000022_31_0_1"/>
<dbReference type="InParanoid" id="B0G103"/>
<dbReference type="PhylomeDB" id="B0G103"/>
<dbReference type="PRO" id="PR:B0G103"/>
<dbReference type="Proteomes" id="UP000002195">
    <property type="component" value="Chromosome 2"/>
</dbReference>
<dbReference type="GO" id="GO:0004315">
    <property type="term" value="F:3-oxoacyl-[acyl-carrier-protein] synthase activity"/>
    <property type="evidence" value="ECO:0007669"/>
    <property type="project" value="InterPro"/>
</dbReference>
<dbReference type="GO" id="GO:0016491">
    <property type="term" value="F:oxidoreductase activity"/>
    <property type="evidence" value="ECO:0007669"/>
    <property type="project" value="InterPro"/>
</dbReference>
<dbReference type="GO" id="GO:0006633">
    <property type="term" value="P:fatty acid biosynthetic process"/>
    <property type="evidence" value="ECO:0000318"/>
    <property type="project" value="GO_Central"/>
</dbReference>
<dbReference type="CDD" id="cd08954">
    <property type="entry name" value="KR_1_FAS_SDR_x"/>
    <property type="match status" value="1"/>
</dbReference>
<dbReference type="CDD" id="cd00833">
    <property type="entry name" value="PKS"/>
    <property type="match status" value="1"/>
</dbReference>
<dbReference type="Gene3D" id="3.30.70.3290">
    <property type="match status" value="1"/>
</dbReference>
<dbReference type="Gene3D" id="3.40.47.10">
    <property type="match status" value="1"/>
</dbReference>
<dbReference type="Gene3D" id="1.10.1200.10">
    <property type="entry name" value="ACP-like"/>
    <property type="match status" value="1"/>
</dbReference>
<dbReference type="Gene3D" id="3.40.366.10">
    <property type="entry name" value="Malonyl-Coenzyme A Acyl Carrier Protein, domain 2"/>
    <property type="match status" value="1"/>
</dbReference>
<dbReference type="Gene3D" id="3.90.180.10">
    <property type="entry name" value="Medium-chain alcohol dehydrogenases, catalytic domain"/>
    <property type="match status" value="2"/>
</dbReference>
<dbReference type="Gene3D" id="3.40.50.720">
    <property type="entry name" value="NAD(P)-binding Rossmann-like Domain"/>
    <property type="match status" value="2"/>
</dbReference>
<dbReference type="Gene3D" id="3.10.129.110">
    <property type="entry name" value="Polyketide synthase dehydratase"/>
    <property type="match status" value="1"/>
</dbReference>
<dbReference type="Gene3D" id="3.40.50.150">
    <property type="entry name" value="Vaccinia Virus protein VP39"/>
    <property type="match status" value="1"/>
</dbReference>
<dbReference type="InterPro" id="IPR001227">
    <property type="entry name" value="Ac_transferase_dom_sf"/>
</dbReference>
<dbReference type="InterPro" id="IPR036736">
    <property type="entry name" value="ACP-like_sf"/>
</dbReference>
<dbReference type="InterPro" id="IPR014043">
    <property type="entry name" value="Acyl_transferase_dom"/>
</dbReference>
<dbReference type="InterPro" id="IPR016035">
    <property type="entry name" value="Acyl_Trfase/lysoPLipase"/>
</dbReference>
<dbReference type="InterPro" id="IPR011032">
    <property type="entry name" value="GroES-like_sf"/>
</dbReference>
<dbReference type="InterPro" id="IPR018201">
    <property type="entry name" value="Ketoacyl_synth_AS"/>
</dbReference>
<dbReference type="InterPro" id="IPR014031">
    <property type="entry name" value="Ketoacyl_synth_C"/>
</dbReference>
<dbReference type="InterPro" id="IPR014030">
    <property type="entry name" value="Ketoacyl_synth_N"/>
</dbReference>
<dbReference type="InterPro" id="IPR016036">
    <property type="entry name" value="Malonyl_transacylase_ACP-bd"/>
</dbReference>
<dbReference type="InterPro" id="IPR013217">
    <property type="entry name" value="Methyltransf_12"/>
</dbReference>
<dbReference type="InterPro" id="IPR036291">
    <property type="entry name" value="NAD(P)-bd_dom_sf"/>
</dbReference>
<dbReference type="InterPro" id="IPR032821">
    <property type="entry name" value="PKS_assoc"/>
</dbReference>
<dbReference type="InterPro" id="IPR020841">
    <property type="entry name" value="PKS_Beta-ketoAc_synthase_dom"/>
</dbReference>
<dbReference type="InterPro" id="IPR042104">
    <property type="entry name" value="PKS_dehydratase_sf"/>
</dbReference>
<dbReference type="InterPro" id="IPR049551">
    <property type="entry name" value="PKS_DH_C"/>
</dbReference>
<dbReference type="InterPro" id="IPR020843">
    <property type="entry name" value="PKS_ER"/>
</dbReference>
<dbReference type="InterPro" id="IPR013968">
    <property type="entry name" value="PKS_KR"/>
</dbReference>
<dbReference type="InterPro" id="IPR049900">
    <property type="entry name" value="PKS_mFAS_DH"/>
</dbReference>
<dbReference type="InterPro" id="IPR050444">
    <property type="entry name" value="Polyketide_Synthase"/>
</dbReference>
<dbReference type="InterPro" id="IPR009081">
    <property type="entry name" value="PP-bd_ACP"/>
</dbReference>
<dbReference type="InterPro" id="IPR029063">
    <property type="entry name" value="SAM-dependent_MTases_sf"/>
</dbReference>
<dbReference type="InterPro" id="IPR016039">
    <property type="entry name" value="Thiolase-like"/>
</dbReference>
<dbReference type="PANTHER" id="PTHR45681:SF4">
    <property type="entry name" value="BETA-KETOACYL SYNTHASE FAMILY PROTEIN-RELATED"/>
    <property type="match status" value="1"/>
</dbReference>
<dbReference type="PANTHER" id="PTHR45681">
    <property type="entry name" value="POLYKETIDE SYNTHASE 44-RELATED"/>
    <property type="match status" value="1"/>
</dbReference>
<dbReference type="Pfam" id="PF23297">
    <property type="entry name" value="ACP_SdgA_C"/>
    <property type="match status" value="1"/>
</dbReference>
<dbReference type="Pfam" id="PF00698">
    <property type="entry name" value="Acyl_transf_1"/>
    <property type="match status" value="1"/>
</dbReference>
<dbReference type="Pfam" id="PF16197">
    <property type="entry name" value="KAsynt_C_assoc"/>
    <property type="match status" value="1"/>
</dbReference>
<dbReference type="Pfam" id="PF00109">
    <property type="entry name" value="ketoacyl-synt"/>
    <property type="match status" value="1"/>
</dbReference>
<dbReference type="Pfam" id="PF02801">
    <property type="entry name" value="Ketoacyl-synt_C"/>
    <property type="match status" value="1"/>
</dbReference>
<dbReference type="Pfam" id="PF08659">
    <property type="entry name" value="KR"/>
    <property type="match status" value="1"/>
</dbReference>
<dbReference type="Pfam" id="PF08242">
    <property type="entry name" value="Methyltransf_12"/>
    <property type="match status" value="1"/>
</dbReference>
<dbReference type="Pfam" id="PF14765">
    <property type="entry name" value="PS-DH"/>
    <property type="match status" value="1"/>
</dbReference>
<dbReference type="SMART" id="SM00827">
    <property type="entry name" value="PKS_AT"/>
    <property type="match status" value="1"/>
</dbReference>
<dbReference type="SMART" id="SM00829">
    <property type="entry name" value="PKS_ER"/>
    <property type="match status" value="1"/>
</dbReference>
<dbReference type="SMART" id="SM00822">
    <property type="entry name" value="PKS_KR"/>
    <property type="match status" value="1"/>
</dbReference>
<dbReference type="SMART" id="SM00825">
    <property type="entry name" value="PKS_KS"/>
    <property type="match status" value="1"/>
</dbReference>
<dbReference type="SUPFAM" id="SSF47336">
    <property type="entry name" value="ACP-like"/>
    <property type="match status" value="1"/>
</dbReference>
<dbReference type="SUPFAM" id="SSF52151">
    <property type="entry name" value="FabD/lysophospholipase-like"/>
    <property type="match status" value="1"/>
</dbReference>
<dbReference type="SUPFAM" id="SSF50129">
    <property type="entry name" value="GroES-like"/>
    <property type="match status" value="1"/>
</dbReference>
<dbReference type="SUPFAM" id="SSF51735">
    <property type="entry name" value="NAD(P)-binding Rossmann-fold domains"/>
    <property type="match status" value="1"/>
</dbReference>
<dbReference type="SUPFAM" id="SSF55048">
    <property type="entry name" value="Probable ACP-binding domain of malonyl-CoA ACP transacylase"/>
    <property type="match status" value="1"/>
</dbReference>
<dbReference type="SUPFAM" id="SSF53335">
    <property type="entry name" value="S-adenosyl-L-methionine-dependent methyltransferases"/>
    <property type="match status" value="1"/>
</dbReference>
<dbReference type="SUPFAM" id="SSF53901">
    <property type="entry name" value="Thiolase-like"/>
    <property type="match status" value="1"/>
</dbReference>
<dbReference type="PROSITE" id="PS50075">
    <property type="entry name" value="CARRIER"/>
    <property type="match status" value="1"/>
</dbReference>
<dbReference type="PROSITE" id="PS00606">
    <property type="entry name" value="KS3_1"/>
    <property type="match status" value="1"/>
</dbReference>
<dbReference type="PROSITE" id="PS52004">
    <property type="entry name" value="KS3_2"/>
    <property type="match status" value="1"/>
</dbReference>
<dbReference type="PROSITE" id="PS52019">
    <property type="entry name" value="PKS_MFAS_DH"/>
    <property type="match status" value="1"/>
</dbReference>
<reference key="1">
    <citation type="journal article" date="2002" name="Nature">
        <title>Sequence and analysis of chromosome 2 of Dictyostelium discoideum.</title>
        <authorList>
            <person name="Gloeckner G."/>
            <person name="Eichinger L."/>
            <person name="Szafranski K."/>
            <person name="Pachebat J.A."/>
            <person name="Bankier A.T."/>
            <person name="Dear P.H."/>
            <person name="Lehmann R."/>
            <person name="Baumgart C."/>
            <person name="Parra G."/>
            <person name="Abril J.F."/>
            <person name="Guigo R."/>
            <person name="Kumpf K."/>
            <person name="Tunggal B."/>
            <person name="Cox E.C."/>
            <person name="Quail M.A."/>
            <person name="Platzer M."/>
            <person name="Rosenthal A."/>
            <person name="Noegel A.A."/>
        </authorList>
    </citation>
    <scope>NUCLEOTIDE SEQUENCE [LARGE SCALE GENOMIC DNA]</scope>
    <source>
        <strain>AX4</strain>
    </source>
</reference>
<reference key="2">
    <citation type="journal article" date="2005" name="Nature">
        <title>The genome of the social amoeba Dictyostelium discoideum.</title>
        <authorList>
            <person name="Eichinger L."/>
            <person name="Pachebat J.A."/>
            <person name="Gloeckner G."/>
            <person name="Rajandream M.A."/>
            <person name="Sucgang R."/>
            <person name="Berriman M."/>
            <person name="Song J."/>
            <person name="Olsen R."/>
            <person name="Szafranski K."/>
            <person name="Xu Q."/>
            <person name="Tunggal B."/>
            <person name="Kummerfeld S."/>
            <person name="Madera M."/>
            <person name="Konfortov B.A."/>
            <person name="Rivero F."/>
            <person name="Bankier A.T."/>
            <person name="Lehmann R."/>
            <person name="Hamlin N."/>
            <person name="Davies R."/>
            <person name="Gaudet P."/>
            <person name="Fey P."/>
            <person name="Pilcher K."/>
            <person name="Chen G."/>
            <person name="Saunders D."/>
            <person name="Sodergren E.J."/>
            <person name="Davis P."/>
            <person name="Kerhornou A."/>
            <person name="Nie X."/>
            <person name="Hall N."/>
            <person name="Anjard C."/>
            <person name="Hemphill L."/>
            <person name="Bason N."/>
            <person name="Farbrother P."/>
            <person name="Desany B."/>
            <person name="Just E."/>
            <person name="Morio T."/>
            <person name="Rost R."/>
            <person name="Churcher C.M."/>
            <person name="Cooper J."/>
            <person name="Haydock S."/>
            <person name="van Driessche N."/>
            <person name="Cronin A."/>
            <person name="Goodhead I."/>
            <person name="Muzny D.M."/>
            <person name="Mourier T."/>
            <person name="Pain A."/>
            <person name="Lu M."/>
            <person name="Harper D."/>
            <person name="Lindsay R."/>
            <person name="Hauser H."/>
            <person name="James K.D."/>
            <person name="Quiles M."/>
            <person name="Madan Babu M."/>
            <person name="Saito T."/>
            <person name="Buchrieser C."/>
            <person name="Wardroper A."/>
            <person name="Felder M."/>
            <person name="Thangavelu M."/>
            <person name="Johnson D."/>
            <person name="Knights A."/>
            <person name="Loulseged H."/>
            <person name="Mungall K.L."/>
            <person name="Oliver K."/>
            <person name="Price C."/>
            <person name="Quail M.A."/>
            <person name="Urushihara H."/>
            <person name="Hernandez J."/>
            <person name="Rabbinowitsch E."/>
            <person name="Steffen D."/>
            <person name="Sanders M."/>
            <person name="Ma J."/>
            <person name="Kohara Y."/>
            <person name="Sharp S."/>
            <person name="Simmonds M.N."/>
            <person name="Spiegler S."/>
            <person name="Tivey A."/>
            <person name="Sugano S."/>
            <person name="White B."/>
            <person name="Walker D."/>
            <person name="Woodward J.R."/>
            <person name="Winckler T."/>
            <person name="Tanaka Y."/>
            <person name="Shaulsky G."/>
            <person name="Schleicher M."/>
            <person name="Weinstock G.M."/>
            <person name="Rosenthal A."/>
            <person name="Cox E.C."/>
            <person name="Chisholm R.L."/>
            <person name="Gibbs R.A."/>
            <person name="Loomis W.F."/>
            <person name="Platzer M."/>
            <person name="Kay R.R."/>
            <person name="Williams J.G."/>
            <person name="Dear P.H."/>
            <person name="Noegel A.A."/>
            <person name="Barrell B.G."/>
            <person name="Kuspa A."/>
        </authorList>
    </citation>
    <scope>NUCLEOTIDE SEQUENCE [LARGE SCALE GENOMIC DNA]</scope>
    <source>
        <strain>AX4</strain>
    </source>
</reference>
<reference key="3">
    <citation type="journal article" date="2007" name="Bioinformatics">
        <title>Polyketide synthase genes and the natural products potential of Dictyostelium discoideum.</title>
        <authorList>
            <person name="Zucko J."/>
            <person name="Skunca N."/>
            <person name="Curk T."/>
            <person name="Zupan B."/>
            <person name="Long P.F."/>
            <person name="Cullum J."/>
            <person name="Kessin R.H."/>
            <person name="Hranueli D."/>
        </authorList>
    </citation>
    <scope>IDENTIFICATION</scope>
</reference>
<organism>
    <name type="scientific">Dictyostelium discoideum</name>
    <name type="common">Social amoeba</name>
    <dbReference type="NCBI Taxonomy" id="44689"/>
    <lineage>
        <taxon>Eukaryota</taxon>
        <taxon>Amoebozoa</taxon>
        <taxon>Evosea</taxon>
        <taxon>Eumycetozoa</taxon>
        <taxon>Dictyostelia</taxon>
        <taxon>Dictyosteliales</taxon>
        <taxon>Dictyosteliaceae</taxon>
        <taxon>Dictyostelium</taxon>
    </lineage>
</organism>
<protein>
    <recommendedName>
        <fullName>Probable polyketide synthase 10</fullName>
        <shortName>dipks10</shortName>
        <ecNumber>2.3.1.-</ecNumber>
    </recommendedName>
</protein>